<proteinExistence type="evidence at protein level"/>
<protein>
    <recommendedName>
        <fullName>Mitogen-activated protein kinase 13</fullName>
        <shortName>AtMPK13</shortName>
        <shortName>MAP kinase 13</shortName>
        <ecNumber>2.7.11.24</ecNumber>
    </recommendedName>
</protein>
<accession>Q9LQQ9</accession>
<feature type="chain" id="PRO_0000245813" description="Mitogen-activated protein kinase 13">
    <location>
        <begin position="1"/>
        <end position="363"/>
    </location>
</feature>
<feature type="domain" description="Protein kinase" evidence="3">
    <location>
        <begin position="33"/>
        <end position="319"/>
    </location>
</feature>
<feature type="short sequence motif" description="TXY">
    <location>
        <begin position="191"/>
        <end position="193"/>
    </location>
</feature>
<feature type="active site" description="Proton acceptor" evidence="3 4">
    <location>
        <position position="159"/>
    </location>
</feature>
<feature type="binding site" evidence="3">
    <location>
        <begin position="39"/>
        <end position="47"/>
    </location>
    <ligand>
        <name>ATP</name>
        <dbReference type="ChEBI" id="CHEBI:30616"/>
    </ligand>
</feature>
<feature type="binding site" evidence="3">
    <location>
        <position position="62"/>
    </location>
    <ligand>
        <name>ATP</name>
        <dbReference type="ChEBI" id="CHEBI:30616"/>
    </ligand>
</feature>
<feature type="modified residue" description="Phosphothreonine" evidence="2">
    <location>
        <position position="191"/>
    </location>
</feature>
<feature type="modified residue" description="Phosphotyrosine" evidence="2">
    <location>
        <position position="193"/>
    </location>
</feature>
<feature type="modified residue" description="Phosphothreonine" evidence="2">
    <location>
        <position position="196"/>
    </location>
</feature>
<feature type="splice variant" id="VSP_036334" description="In isoform 2." evidence="9">
    <original>LLGSPD</original>
    <variation>VSKLKP</variation>
    <location>
        <begin position="249"/>
        <end position="254"/>
    </location>
</feature>
<feature type="splice variant" id="VSP_036335" description="In isoform 2." evidence="9">
    <location>
        <begin position="255"/>
        <end position="363"/>
    </location>
</feature>
<feature type="sequence conflict" description="In Ref. 3; BX818168." evidence="10" ref="3">
    <original>L</original>
    <variation>P</variation>
    <location sequence="Q9LQQ9-2">
        <position position="243"/>
    </location>
</feature>
<reference key="1">
    <citation type="journal article" date="2000" name="Nature">
        <title>Sequence and analysis of chromosome 1 of the plant Arabidopsis thaliana.</title>
        <authorList>
            <person name="Theologis A."/>
            <person name="Ecker J.R."/>
            <person name="Palm C.J."/>
            <person name="Federspiel N.A."/>
            <person name="Kaul S."/>
            <person name="White O."/>
            <person name="Alonso J."/>
            <person name="Altafi H."/>
            <person name="Araujo R."/>
            <person name="Bowman C.L."/>
            <person name="Brooks S.Y."/>
            <person name="Buehler E."/>
            <person name="Chan A."/>
            <person name="Chao Q."/>
            <person name="Chen H."/>
            <person name="Cheuk R.F."/>
            <person name="Chin C.W."/>
            <person name="Chung M.K."/>
            <person name="Conn L."/>
            <person name="Conway A.B."/>
            <person name="Conway A.R."/>
            <person name="Creasy T.H."/>
            <person name="Dewar K."/>
            <person name="Dunn P."/>
            <person name="Etgu P."/>
            <person name="Feldblyum T.V."/>
            <person name="Feng J.-D."/>
            <person name="Fong B."/>
            <person name="Fujii C.Y."/>
            <person name="Gill J.E."/>
            <person name="Goldsmith A.D."/>
            <person name="Haas B."/>
            <person name="Hansen N.F."/>
            <person name="Hughes B."/>
            <person name="Huizar L."/>
            <person name="Hunter J.L."/>
            <person name="Jenkins J."/>
            <person name="Johnson-Hopson C."/>
            <person name="Khan S."/>
            <person name="Khaykin E."/>
            <person name="Kim C.J."/>
            <person name="Koo H.L."/>
            <person name="Kremenetskaia I."/>
            <person name="Kurtz D.B."/>
            <person name="Kwan A."/>
            <person name="Lam B."/>
            <person name="Langin-Hooper S."/>
            <person name="Lee A."/>
            <person name="Lee J.M."/>
            <person name="Lenz C.A."/>
            <person name="Li J.H."/>
            <person name="Li Y.-P."/>
            <person name="Lin X."/>
            <person name="Liu S.X."/>
            <person name="Liu Z.A."/>
            <person name="Luros J.S."/>
            <person name="Maiti R."/>
            <person name="Marziali A."/>
            <person name="Militscher J."/>
            <person name="Miranda M."/>
            <person name="Nguyen M."/>
            <person name="Nierman W.C."/>
            <person name="Osborne B.I."/>
            <person name="Pai G."/>
            <person name="Peterson J."/>
            <person name="Pham P.K."/>
            <person name="Rizzo M."/>
            <person name="Rooney T."/>
            <person name="Rowley D."/>
            <person name="Sakano H."/>
            <person name="Salzberg S.L."/>
            <person name="Schwartz J.R."/>
            <person name="Shinn P."/>
            <person name="Southwick A.M."/>
            <person name="Sun H."/>
            <person name="Tallon L.J."/>
            <person name="Tambunga G."/>
            <person name="Toriumi M.J."/>
            <person name="Town C.D."/>
            <person name="Utterback T."/>
            <person name="Van Aken S."/>
            <person name="Vaysberg M."/>
            <person name="Vysotskaia V.S."/>
            <person name="Walker M."/>
            <person name="Wu D."/>
            <person name="Yu G."/>
            <person name="Fraser C.M."/>
            <person name="Venter J.C."/>
            <person name="Davis R.W."/>
        </authorList>
    </citation>
    <scope>NUCLEOTIDE SEQUENCE [LARGE SCALE GENOMIC DNA]</scope>
    <source>
        <strain>cv. Columbia</strain>
    </source>
</reference>
<reference key="2">
    <citation type="journal article" date="2017" name="Plant J.">
        <title>Araport11: a complete reannotation of the Arabidopsis thaliana reference genome.</title>
        <authorList>
            <person name="Cheng C.Y."/>
            <person name="Krishnakumar V."/>
            <person name="Chan A.P."/>
            <person name="Thibaud-Nissen F."/>
            <person name="Schobel S."/>
            <person name="Town C.D."/>
        </authorList>
    </citation>
    <scope>GENOME REANNOTATION</scope>
    <source>
        <strain>cv. Columbia</strain>
    </source>
</reference>
<reference key="3">
    <citation type="journal article" date="2004" name="Genome Res.">
        <title>Whole genome sequence comparisons and 'full-length' cDNA sequences: a combined approach to evaluate and improve Arabidopsis genome annotation.</title>
        <authorList>
            <person name="Castelli V."/>
            <person name="Aury J.-M."/>
            <person name="Jaillon O."/>
            <person name="Wincker P."/>
            <person name="Clepet C."/>
            <person name="Menard M."/>
            <person name="Cruaud C."/>
            <person name="Quetier F."/>
            <person name="Scarpelli C."/>
            <person name="Schaechter V."/>
            <person name="Temple G."/>
            <person name="Caboche M."/>
            <person name="Weissenbach J."/>
            <person name="Salanoubat M."/>
        </authorList>
    </citation>
    <scope>NUCLEOTIDE SEQUENCE [LARGE SCALE MRNA] (ISOFORM 2)</scope>
    <source>
        <strain>cv. Columbia</strain>
    </source>
</reference>
<reference key="4">
    <citation type="submission" date="2004-10" db="EMBL/GenBank/DDBJ databases">
        <title>Arabidopsis ORF clones.</title>
        <authorList>
            <person name="Kim C.J."/>
            <person name="Chen H."/>
            <person name="Cheuk R.F."/>
            <person name="Shinn P."/>
            <person name="Ecker J.R."/>
        </authorList>
    </citation>
    <scope>NUCLEOTIDE SEQUENCE [LARGE SCALE MRNA] (ISOFORM 1)</scope>
    <source>
        <strain>cv. Columbia</strain>
    </source>
</reference>
<reference key="5">
    <citation type="journal article" date="2002" name="Trends Plant Sci.">
        <title>Mitogen-activated protein kinase cascades in plants: a new nomenclature.</title>
        <authorList>
            <consortium name="MAPK group"/>
        </authorList>
    </citation>
    <scope>GENE FAMILY</scope>
    <scope>NOMENCLATURE</scope>
</reference>
<reference key="6">
    <citation type="journal article" date="2004" name="FEBS Lett.">
        <title>The Arabidopsis thaliana MEK AtMKK6 activates the MAP kinase AtMPK13.</title>
        <authorList>
            <person name="Melikant B."/>
            <person name="Giuliani C."/>
            <person name="Halbmayer-Watzina S."/>
            <person name="Limmongkon A."/>
            <person name="Heberle-Bors E."/>
            <person name="Wilson C."/>
        </authorList>
    </citation>
    <scope>ACTIVITY REGULATION</scope>
    <scope>TISSUE SPECIFICITY</scope>
</reference>
<reference key="7">
    <citation type="journal article" date="2006" name="Trends Plant Sci.">
        <title>Ancient signals: comparative genomics of plant MAPK and MAPKK gene families.</title>
        <authorList>
            <person name="Hamel L.P."/>
            <person name="Nicole M.C."/>
            <person name="Sritubtim S."/>
            <person name="Morency M.J."/>
            <person name="Ellis M."/>
            <person name="Ehlting J."/>
            <person name="Beaudoin N."/>
            <person name="Barbazuk B."/>
            <person name="Klessig D."/>
            <person name="Lee J."/>
            <person name="Martin G."/>
            <person name="Mundy J."/>
            <person name="Ohashi Y."/>
            <person name="Scheel D."/>
            <person name="Sheen J."/>
            <person name="Xing T."/>
            <person name="Zhang S."/>
            <person name="Seguin A."/>
            <person name="Ellis B.E."/>
        </authorList>
    </citation>
    <scope>GENE FAMILY</scope>
</reference>
<reference key="8">
    <citation type="journal article" date="2010" name="Plant Cell">
        <title>The MAP kinase MPK4 is required for cytokinesis in Arabidopsis thaliana.</title>
        <authorList>
            <person name="Kosetsu K."/>
            <person name="Matsunaga S."/>
            <person name="Nakagami H."/>
            <person name="Colcombet J."/>
            <person name="Sasabe M."/>
            <person name="Soyano T."/>
            <person name="Takahashi Y."/>
            <person name="Hirt H."/>
            <person name="Machida Y."/>
        </authorList>
    </citation>
    <scope>ACTIVITY REGULATION</scope>
</reference>
<reference key="9">
    <citation type="journal article" date="2011" name="Plant J.">
        <title>AtMPK4 is required for male-specific meiotic cytokinesis in Arabidopsis.</title>
        <authorList>
            <person name="Zeng Q."/>
            <person name="Chen J.G."/>
            <person name="Ellis B.E."/>
        </authorList>
    </citation>
    <scope>INTERACTION WITH MKK6</scope>
</reference>
<reference key="10">
    <citation type="journal article" date="2011" name="Plant Signal. Behav.">
        <title>AtMKK6 and AtMPK13 are required for lateral root formation in Arabidopsis.</title>
        <authorList>
            <person name="Zeng Q."/>
            <person name="Sritubtim S."/>
            <person name="Ellis B.E."/>
        </authorList>
    </citation>
    <scope>FUNCTION</scope>
    <scope>DISRUPTION PHENOTYPE</scope>
</reference>
<dbReference type="EC" id="2.7.11.24"/>
<dbReference type="EMBL" id="AC007583">
    <property type="protein sequence ID" value="AAF75067.1"/>
    <property type="molecule type" value="Genomic_DNA"/>
</dbReference>
<dbReference type="EMBL" id="CP002684">
    <property type="protein sequence ID" value="AEE28197.1"/>
    <property type="molecule type" value="Genomic_DNA"/>
</dbReference>
<dbReference type="EMBL" id="CP002684">
    <property type="protein sequence ID" value="AEE28198.1"/>
    <property type="molecule type" value="Genomic_DNA"/>
</dbReference>
<dbReference type="EMBL" id="BX818168">
    <property type="status" value="NOT_ANNOTATED_CDS"/>
    <property type="molecule type" value="mRNA"/>
</dbReference>
<dbReference type="EMBL" id="BT015822">
    <property type="protein sequence ID" value="AAU94385.1"/>
    <property type="molecule type" value="mRNA"/>
</dbReference>
<dbReference type="PIR" id="C86214">
    <property type="entry name" value="C86214"/>
</dbReference>
<dbReference type="RefSeq" id="NP_001030990.1">
    <molecule id="Q9LQQ9-1"/>
    <property type="nucleotide sequence ID" value="NM_001035913.2"/>
</dbReference>
<dbReference type="RefSeq" id="NP_172266.2">
    <molecule id="Q9LQQ9-2"/>
    <property type="nucleotide sequence ID" value="NM_100662.4"/>
</dbReference>
<dbReference type="SMR" id="Q9LQQ9"/>
<dbReference type="BioGRID" id="22544">
    <property type="interactions" value="2"/>
</dbReference>
<dbReference type="FunCoup" id="Q9LQQ9">
    <property type="interactions" value="2380"/>
</dbReference>
<dbReference type="IntAct" id="Q9LQQ9">
    <property type="interactions" value="2"/>
</dbReference>
<dbReference type="MINT" id="Q9LQQ9"/>
<dbReference type="STRING" id="3702.Q9LQQ9"/>
<dbReference type="iPTMnet" id="Q9LQQ9"/>
<dbReference type="PaxDb" id="3702-AT1G07880.2"/>
<dbReference type="ProteomicsDB" id="238275">
    <molecule id="Q9LQQ9-1"/>
</dbReference>
<dbReference type="EnsemblPlants" id="AT1G07880.1">
    <molecule id="Q9LQQ9-2"/>
    <property type="protein sequence ID" value="AT1G07880.1"/>
    <property type="gene ID" value="AT1G07880"/>
</dbReference>
<dbReference type="EnsemblPlants" id="AT1G07880.2">
    <molecule id="Q9LQQ9-1"/>
    <property type="protein sequence ID" value="AT1G07880.2"/>
    <property type="gene ID" value="AT1G07880"/>
</dbReference>
<dbReference type="GeneID" id="837303"/>
<dbReference type="Gramene" id="AT1G07880.1">
    <molecule id="Q9LQQ9-2"/>
    <property type="protein sequence ID" value="AT1G07880.1"/>
    <property type="gene ID" value="AT1G07880"/>
</dbReference>
<dbReference type="Gramene" id="AT1G07880.2">
    <molecule id="Q9LQQ9-1"/>
    <property type="protein sequence ID" value="AT1G07880.2"/>
    <property type="gene ID" value="AT1G07880"/>
</dbReference>
<dbReference type="KEGG" id="ath:AT1G07880"/>
<dbReference type="Araport" id="AT1G07880"/>
<dbReference type="TAIR" id="AT1G07880">
    <property type="gene designation" value="ATMPK13"/>
</dbReference>
<dbReference type="eggNOG" id="KOG0660">
    <property type="taxonomic scope" value="Eukaryota"/>
</dbReference>
<dbReference type="InParanoid" id="Q9LQQ9"/>
<dbReference type="OMA" id="QNMTHEV"/>
<dbReference type="OrthoDB" id="192887at2759"/>
<dbReference type="PhylomeDB" id="Q9LQQ9"/>
<dbReference type="PRO" id="PR:Q9LQQ9"/>
<dbReference type="Proteomes" id="UP000006548">
    <property type="component" value="Chromosome 1"/>
</dbReference>
<dbReference type="ExpressionAtlas" id="Q9LQQ9">
    <property type="expression patterns" value="baseline and differential"/>
</dbReference>
<dbReference type="GO" id="GO:0005524">
    <property type="term" value="F:ATP binding"/>
    <property type="evidence" value="ECO:0007669"/>
    <property type="project" value="UniProtKB-KW"/>
</dbReference>
<dbReference type="GO" id="GO:0004707">
    <property type="term" value="F:MAP kinase activity"/>
    <property type="evidence" value="ECO:0000250"/>
    <property type="project" value="TAIR"/>
</dbReference>
<dbReference type="GO" id="GO:0106310">
    <property type="term" value="F:protein serine kinase activity"/>
    <property type="evidence" value="ECO:0007669"/>
    <property type="project" value="RHEA"/>
</dbReference>
<dbReference type="GO" id="GO:0010311">
    <property type="term" value="P:lateral root formation"/>
    <property type="evidence" value="ECO:0000315"/>
    <property type="project" value="UniProtKB"/>
</dbReference>
<dbReference type="CDD" id="cd07858">
    <property type="entry name" value="STKc_TEY_MAPK"/>
    <property type="match status" value="1"/>
</dbReference>
<dbReference type="FunFam" id="1.10.510.10:FF:000013">
    <property type="entry name" value="Mitogen-activated protein kinase"/>
    <property type="match status" value="1"/>
</dbReference>
<dbReference type="FunFam" id="3.30.200.20:FF:000046">
    <property type="entry name" value="Mitogen-activated protein kinase"/>
    <property type="match status" value="1"/>
</dbReference>
<dbReference type="Gene3D" id="3.30.200.20">
    <property type="entry name" value="Phosphorylase Kinase, domain 1"/>
    <property type="match status" value="1"/>
</dbReference>
<dbReference type="Gene3D" id="1.10.510.10">
    <property type="entry name" value="Transferase(Phosphotransferase) domain 1"/>
    <property type="match status" value="1"/>
</dbReference>
<dbReference type="InterPro" id="IPR011009">
    <property type="entry name" value="Kinase-like_dom_sf"/>
</dbReference>
<dbReference type="InterPro" id="IPR050117">
    <property type="entry name" value="MAP_kinase"/>
</dbReference>
<dbReference type="InterPro" id="IPR003527">
    <property type="entry name" value="MAP_kinase_CS"/>
</dbReference>
<dbReference type="InterPro" id="IPR000719">
    <property type="entry name" value="Prot_kinase_dom"/>
</dbReference>
<dbReference type="InterPro" id="IPR017441">
    <property type="entry name" value="Protein_kinase_ATP_BS"/>
</dbReference>
<dbReference type="InterPro" id="IPR008271">
    <property type="entry name" value="Ser/Thr_kinase_AS"/>
</dbReference>
<dbReference type="PANTHER" id="PTHR24055">
    <property type="entry name" value="MITOGEN-ACTIVATED PROTEIN KINASE"/>
    <property type="match status" value="1"/>
</dbReference>
<dbReference type="Pfam" id="PF00069">
    <property type="entry name" value="Pkinase"/>
    <property type="match status" value="1"/>
</dbReference>
<dbReference type="SMART" id="SM00220">
    <property type="entry name" value="S_TKc"/>
    <property type="match status" value="1"/>
</dbReference>
<dbReference type="SUPFAM" id="SSF56112">
    <property type="entry name" value="Protein kinase-like (PK-like)"/>
    <property type="match status" value="1"/>
</dbReference>
<dbReference type="PROSITE" id="PS01351">
    <property type="entry name" value="MAPK"/>
    <property type="match status" value="1"/>
</dbReference>
<dbReference type="PROSITE" id="PS00107">
    <property type="entry name" value="PROTEIN_KINASE_ATP"/>
    <property type="match status" value="1"/>
</dbReference>
<dbReference type="PROSITE" id="PS50011">
    <property type="entry name" value="PROTEIN_KINASE_DOM"/>
    <property type="match status" value="1"/>
</dbReference>
<dbReference type="PROSITE" id="PS00108">
    <property type="entry name" value="PROTEIN_KINASE_ST"/>
    <property type="match status" value="1"/>
</dbReference>
<name>MPK13_ARATH</name>
<gene>
    <name type="primary">MPK13</name>
    <name type="ordered locus">At1g07880</name>
    <name type="ORF">F24B9.3</name>
</gene>
<keyword id="KW-0025">Alternative splicing</keyword>
<keyword id="KW-0067">ATP-binding</keyword>
<keyword id="KW-0418">Kinase</keyword>
<keyword id="KW-0547">Nucleotide-binding</keyword>
<keyword id="KW-0597">Phosphoprotein</keyword>
<keyword id="KW-1185">Reference proteome</keyword>
<keyword id="KW-0723">Serine/threonine-protein kinase</keyword>
<keyword id="KW-0808">Transferase</keyword>
<evidence type="ECO:0000250" key="1"/>
<evidence type="ECO:0000250" key="2">
    <source>
        <dbReference type="UniProtKB" id="Q39026"/>
    </source>
</evidence>
<evidence type="ECO:0000255" key="3">
    <source>
        <dbReference type="PROSITE-ProRule" id="PRU00159"/>
    </source>
</evidence>
<evidence type="ECO:0000255" key="4">
    <source>
        <dbReference type="PROSITE-ProRule" id="PRU10027"/>
    </source>
</evidence>
<evidence type="ECO:0000269" key="5">
    <source>
    </source>
</evidence>
<evidence type="ECO:0000269" key="6">
    <source>
    </source>
</evidence>
<evidence type="ECO:0000269" key="7">
    <source>
    </source>
</evidence>
<evidence type="ECO:0000269" key="8">
    <source>
    </source>
</evidence>
<evidence type="ECO:0000303" key="9">
    <source>
    </source>
</evidence>
<evidence type="ECO:0000305" key="10"/>
<sequence>MEKREDGGILTYDGRYVMYNVLGNIFELSSKYIPPIEPIGRGAYGIVCCATNSETNEEVAIKKIANAFDNRVDAKRTLREIKLLSHMDHDNVIKIKDIIELPEKERFEDVYIVYELMDTDLHQIIRSTQTLTDDHCQYFLYQILRGLKYIHSANVLHRDLKPSNLVLNTNCDLKICDFGLARTSNETEIMTEYVVTRWYRAPELLLNSSEYTGAIDIWSVGCIFMEILRRETLFPGKDYVQQLKLITELLGSPDDSDLDFLRSDNARKYVKQLPHVQKQSFREKFPNISPMALDLAEKMLVFDPSKRITVDEALKQPYLASLHEINEEPTCPTPFSFDFEETALDEQDIKELVWRESLHFKNM</sequence>
<organism>
    <name type="scientific">Arabidopsis thaliana</name>
    <name type="common">Mouse-ear cress</name>
    <dbReference type="NCBI Taxonomy" id="3702"/>
    <lineage>
        <taxon>Eukaryota</taxon>
        <taxon>Viridiplantae</taxon>
        <taxon>Streptophyta</taxon>
        <taxon>Embryophyta</taxon>
        <taxon>Tracheophyta</taxon>
        <taxon>Spermatophyta</taxon>
        <taxon>Magnoliopsida</taxon>
        <taxon>eudicotyledons</taxon>
        <taxon>Gunneridae</taxon>
        <taxon>Pentapetalae</taxon>
        <taxon>rosids</taxon>
        <taxon>malvids</taxon>
        <taxon>Brassicales</taxon>
        <taxon>Brassicaceae</taxon>
        <taxon>Camelineae</taxon>
        <taxon>Arabidopsis</taxon>
    </lineage>
</organism>
<comment type="function">
    <text evidence="8">MKK6-MPK13 module positively regulates lateral root formation.</text>
</comment>
<comment type="catalytic activity">
    <reaction>
        <text>L-seryl-[protein] + ATP = O-phospho-L-seryl-[protein] + ADP + H(+)</text>
        <dbReference type="Rhea" id="RHEA:17989"/>
        <dbReference type="Rhea" id="RHEA-COMP:9863"/>
        <dbReference type="Rhea" id="RHEA-COMP:11604"/>
        <dbReference type="ChEBI" id="CHEBI:15378"/>
        <dbReference type="ChEBI" id="CHEBI:29999"/>
        <dbReference type="ChEBI" id="CHEBI:30616"/>
        <dbReference type="ChEBI" id="CHEBI:83421"/>
        <dbReference type="ChEBI" id="CHEBI:456216"/>
        <dbReference type="EC" id="2.7.11.24"/>
    </reaction>
</comment>
<comment type="catalytic activity">
    <reaction>
        <text>L-threonyl-[protein] + ATP = O-phospho-L-threonyl-[protein] + ADP + H(+)</text>
        <dbReference type="Rhea" id="RHEA:46608"/>
        <dbReference type="Rhea" id="RHEA-COMP:11060"/>
        <dbReference type="Rhea" id="RHEA-COMP:11605"/>
        <dbReference type="ChEBI" id="CHEBI:15378"/>
        <dbReference type="ChEBI" id="CHEBI:30013"/>
        <dbReference type="ChEBI" id="CHEBI:30616"/>
        <dbReference type="ChEBI" id="CHEBI:61977"/>
        <dbReference type="ChEBI" id="CHEBI:456216"/>
        <dbReference type="EC" id="2.7.11.24"/>
    </reaction>
</comment>
<comment type="activity regulation">
    <text evidence="1 5 6">Activated by threonine and tyrosine phosphorylation (By similarity). Activated by the MAP kinase kinase MKK6 in vitro.</text>
</comment>
<comment type="subunit">
    <text evidence="7">Interacts with MKK6.</text>
</comment>
<comment type="interaction">
    <interactant intactId="EBI-2358762">
        <id>Q9LQQ9</id>
    </interactant>
    <interactant intactId="EBI-994350">
        <id>Q9S7U9</id>
        <label>MKK2</label>
    </interactant>
    <organismsDiffer>false</organismsDiffer>
    <experiments>2</experiments>
</comment>
<comment type="alternative products">
    <event type="alternative splicing"/>
    <isoform>
        <id>Q9LQQ9-1</id>
        <name>1</name>
        <sequence type="displayed"/>
    </isoform>
    <isoform>
        <id>Q9LQQ9-2</id>
        <name>2</name>
        <sequence type="described" ref="VSP_036334 VSP_036335"/>
    </isoform>
</comment>
<comment type="tissue specificity">
    <text evidence="5">Expressed in roots, stems and flower buds.</text>
</comment>
<comment type="domain">
    <text>The TXY motif contains the threonine and tyrosine residues whose phosphorylation activates the MAP kinases.</text>
</comment>
<comment type="PTM">
    <text evidence="1">Dually phosphorylated on Thr-191 and Tyr-193, which activates the enzyme.</text>
</comment>
<comment type="disruption phenotype">
    <text evidence="8">RNAi MPK13 displays fewer lateral roots.</text>
</comment>
<comment type="miscellaneous">
    <molecule>Isoform 2</molecule>
    <text evidence="10">May be due to an intron retention.</text>
</comment>
<comment type="similarity">
    <text evidence="10">Belongs to the protein kinase superfamily. CMGC Ser/Thr protein kinase family. MAP kinase subfamily.</text>
</comment>